<evidence type="ECO:0000255" key="1"/>
<evidence type="ECO:0000269" key="2">
    <source>
    </source>
</evidence>
<evidence type="ECO:0000269" key="3">
    <source>
    </source>
</evidence>
<evidence type="ECO:0000269" key="4">
    <source>
    </source>
</evidence>
<evidence type="ECO:0000303" key="5">
    <source>
    </source>
</evidence>
<evidence type="ECO:0000303" key="6">
    <source>
    </source>
</evidence>
<evidence type="ECO:0000305" key="7"/>
<evidence type="ECO:0000305" key="8">
    <source>
    </source>
</evidence>
<evidence type="ECO:0000305" key="9">
    <source>
    </source>
</evidence>
<evidence type="ECO:0000305" key="10">
    <source>
    </source>
</evidence>
<evidence type="ECO:0000312" key="11">
    <source>
        <dbReference type="EMBL" id="ACU30738.1"/>
    </source>
</evidence>
<accession>P86146</accession>
<accession>C7DT07</accession>
<sequence length="79" mass="8029">MKQTIVIVLLAAVAMMACLQMVAAEPLPEAAPAPSPLAEAEALASPIAEALANPEALASPEAGRILSFIKGLAEHLGKK</sequence>
<protein>
    <recommendedName>
        <fullName evidence="5">Eumenine mastoparan-OD</fullName>
        <shortName evidence="5">EMP-OD</shortName>
    </recommendedName>
    <alternativeName>
        <fullName evidence="9 11">Venom peptide 1</fullName>
        <shortName evidence="6">OdVP1</shortName>
        <shortName evidence="6">VP1</shortName>
    </alternativeName>
</protein>
<keyword id="KW-0027">Amidation</keyword>
<keyword id="KW-0044">Antibiotic</keyword>
<keyword id="KW-0929">Antimicrobial</keyword>
<keyword id="KW-0204">Cytolysis</keyword>
<keyword id="KW-0903">Direct protein sequencing</keyword>
<keyword id="KW-0295">Fungicide</keyword>
<keyword id="KW-0391">Immunity</keyword>
<keyword id="KW-0399">Innate immunity</keyword>
<keyword id="KW-0472">Membrane</keyword>
<keyword id="KW-0677">Repeat</keyword>
<keyword id="KW-0964">Secreted</keyword>
<keyword id="KW-0732">Signal</keyword>
<keyword id="KW-1052">Target cell membrane</keyword>
<keyword id="KW-1053">Target membrane</keyword>
<keyword id="KW-0800">Toxin</keyword>
<proteinExistence type="evidence at protein level"/>
<reference key="1">
    <citation type="journal article" date="2010" name="Toxicon">
        <title>Isolation and molecular cloning of venom peptides from Orancistrocerus drewseni (Hymenoptera: Eumenidae).</title>
        <authorList>
            <person name="Baek J.H."/>
            <person name="Lee S.H."/>
        </authorList>
    </citation>
    <scope>NUCLEOTIDE SEQUENCE [MRNA]</scope>
    <scope>PROTEIN SEQUENCE OF 63-76</scope>
    <scope>FUNCTION</scope>
    <scope>SUBCELLULAR LOCATION</scope>
    <scope>MASS SPECTROMETRY</scope>
    <scope>AMIDATION AT LEU-76</scope>
    <source>
        <tissue>Venom</tissue>
        <tissue>Venom gland</tissue>
    </source>
</reference>
<reference key="2">
    <citation type="journal article" date="2009" name="Amino Acids">
        <title>Novel mastoparan and protonectin analogs isolated from a solitary wasp, Orancistrocerus drewseni drewseni.</title>
        <authorList>
            <person name="Murata K."/>
            <person name="Shinada T."/>
            <person name="Ohfune Y."/>
            <person name="Hisada M."/>
            <person name="Yasuda A."/>
            <person name="Naoki H."/>
            <person name="Nakajima T."/>
        </authorList>
    </citation>
    <scope>PROTEIN SEQUENCE OF 63-76</scope>
    <scope>FUNCTION</scope>
    <scope>SUBCELLULAR LOCATION</scope>
    <scope>MASS SPECTROMETRY</scope>
    <scope>AMIDATION AT LEU-76</scope>
    <source>
        <tissue>Venom</tissue>
    </source>
</reference>
<reference key="3">
    <citation type="journal article" date="2011" name="Peptides">
        <title>Venom peptides from solitary hunting wasps induce feeding disorder in lepidopteran larvae.</title>
        <authorList>
            <person name="Baek J.H."/>
            <person name="Ji Y."/>
            <person name="Shin J.S."/>
            <person name="Lee S."/>
            <person name="Lee S.H."/>
        </authorList>
    </citation>
    <scope>FUNCTION</scope>
    <scope>BIOASSAY</scope>
    <scope>SYNTHESIS OF 63-76</scope>
</reference>
<reference key="4">
    <citation type="journal article" date="2016" name="Toxins">
        <title>Peptide toxins in solitary wasp venoms.</title>
        <authorList>
            <person name="Konno K."/>
            <person name="Kazuma K."/>
            <person name="Nihei K."/>
        </authorList>
    </citation>
    <scope>REVIEW</scope>
</reference>
<comment type="function">
    <text evidence="2 3 4">Antimicrobial peptide with strong activity against the fungi C.albicans (MIC=6 uM) and B.cinerea (MIC=10 uM), and weaker activity against the Gram-negative bacterium E.coli (MIC=97 uM) and Gram-positive bacterium S.aureus (MIC=97 uM) (PubMed:19857508, PubMed:21184791). Shows cytolytic activity against insect cell lines (PubMed:21184791). Has potent hemolytic activity against ovine erythrocytes (80% at 50 uM), but has no hemolytic activity against human erythrocytes (PubMed:18695936, PubMed:21184791). In vivo, peptide injection in the vicinity of the head and thorax of lepidopteran larvae induces feeding disorder that lasts one or two days before recovering (PubMed:21184791).</text>
</comment>
<comment type="subcellular location">
    <subcellularLocation>
        <location evidence="2 3">Secreted</location>
    </subcellularLocation>
    <subcellularLocation>
        <location evidence="7">Target cell membrane</location>
    </subcellularLocation>
    <text evidence="10">Has an amphipathic alpha-helical conformation.</text>
</comment>
<comment type="tissue specificity">
    <text evidence="8 9">Expressed by the venom gland.</text>
</comment>
<comment type="mass spectrometry" mass="1552.9" method="MALDI" evidence="2"/>
<comment type="mass spectrometry" mass="1551.8" method="Electrospray" evidence="2"/>
<comment type="mass spectrometry" mass="1551.9" method="MALDI" evidence="3"/>
<comment type="similarity">
    <text evidence="2">Belongs to the MCD family. Mastoparan subfamily.</text>
</comment>
<name>MAST_ORADR</name>
<feature type="signal peptide" evidence="1">
    <location>
        <begin position="1"/>
        <end position="24"/>
    </location>
</feature>
<feature type="propeptide" id="PRO_0000390690" evidence="8 9">
    <location>
        <begin position="25"/>
        <end position="62"/>
    </location>
</feature>
<feature type="peptide" id="PRO_0000372683" description="Eumenine mastoparan-OD" evidence="2 3">
    <location>
        <begin position="63"/>
        <end position="76"/>
    </location>
</feature>
<feature type="repeat" description="AXPX 1" evidence="7">
    <location>
        <begin position="24"/>
        <end position="27"/>
    </location>
</feature>
<feature type="repeat" description="AXPX 2" evidence="7">
    <location>
        <begin position="30"/>
        <end position="33"/>
    </location>
</feature>
<feature type="repeat" description="AXPX 3" evidence="7">
    <location>
        <begin position="44"/>
        <end position="47"/>
    </location>
</feature>
<feature type="repeat" description="AXPX 4" evidence="7">
    <location>
        <begin position="52"/>
        <end position="55"/>
    </location>
</feature>
<feature type="repeat" description="AXPX 5" evidence="7">
    <location>
        <begin position="58"/>
        <end position="61"/>
    </location>
</feature>
<feature type="modified residue" description="Leucine amide" evidence="2 3">
    <location>
        <position position="76"/>
    </location>
</feature>
<dbReference type="EMBL" id="GQ205580">
    <property type="protein sequence ID" value="ACU30738.1"/>
    <property type="molecule type" value="mRNA"/>
</dbReference>
<dbReference type="GO" id="GO:0005576">
    <property type="term" value="C:extracellular region"/>
    <property type="evidence" value="ECO:0000314"/>
    <property type="project" value="UniProtKB"/>
</dbReference>
<dbReference type="GO" id="GO:0016020">
    <property type="term" value="C:membrane"/>
    <property type="evidence" value="ECO:0007669"/>
    <property type="project" value="UniProtKB-KW"/>
</dbReference>
<dbReference type="GO" id="GO:0044218">
    <property type="term" value="C:other organism cell membrane"/>
    <property type="evidence" value="ECO:0007669"/>
    <property type="project" value="UniProtKB-KW"/>
</dbReference>
<dbReference type="GO" id="GO:0090729">
    <property type="term" value="F:toxin activity"/>
    <property type="evidence" value="ECO:0000314"/>
    <property type="project" value="UniProtKB"/>
</dbReference>
<dbReference type="GO" id="GO:0050832">
    <property type="term" value="P:defense response to fungus"/>
    <property type="evidence" value="ECO:0000314"/>
    <property type="project" value="UniProtKB"/>
</dbReference>
<dbReference type="GO" id="GO:0050829">
    <property type="term" value="P:defense response to Gram-negative bacterium"/>
    <property type="evidence" value="ECO:0000314"/>
    <property type="project" value="UniProtKB"/>
</dbReference>
<dbReference type="GO" id="GO:0050830">
    <property type="term" value="P:defense response to Gram-positive bacterium"/>
    <property type="evidence" value="ECO:0000314"/>
    <property type="project" value="UniProtKB"/>
</dbReference>
<dbReference type="GO" id="GO:0044179">
    <property type="term" value="P:hemolysis in another organism"/>
    <property type="evidence" value="ECO:0000314"/>
    <property type="project" value="UniProtKB"/>
</dbReference>
<dbReference type="GO" id="GO:0045087">
    <property type="term" value="P:innate immune response"/>
    <property type="evidence" value="ECO:0007669"/>
    <property type="project" value="UniProtKB-KW"/>
</dbReference>
<organism>
    <name type="scientific">Orancistrocerus drewseni</name>
    <name type="common">Solitary wasp</name>
    <dbReference type="NCBI Taxonomy" id="529024"/>
    <lineage>
        <taxon>Eukaryota</taxon>
        <taxon>Metazoa</taxon>
        <taxon>Ecdysozoa</taxon>
        <taxon>Arthropoda</taxon>
        <taxon>Hexapoda</taxon>
        <taxon>Insecta</taxon>
        <taxon>Pterygota</taxon>
        <taxon>Neoptera</taxon>
        <taxon>Endopterygota</taxon>
        <taxon>Hymenoptera</taxon>
        <taxon>Apocrita</taxon>
        <taxon>Aculeata</taxon>
        <taxon>Vespoidea</taxon>
        <taxon>Vespidae</taxon>
        <taxon>Eumeninae</taxon>
        <taxon>Orancistrocerus</taxon>
    </lineage>
</organism>